<dbReference type="EC" id="2.3.1.9" evidence="4 7 8 10 12"/>
<dbReference type="EMBL" id="D90228">
    <property type="protein sequence ID" value="BAA14278.1"/>
    <property type="molecule type" value="mRNA"/>
</dbReference>
<dbReference type="EMBL" id="D10511">
    <property type="protein sequence ID" value="BAA01387.1"/>
    <property type="molecule type" value="Genomic_DNA"/>
</dbReference>
<dbReference type="EMBL" id="AK312574">
    <property type="protein sequence ID" value="BAG35468.1"/>
    <property type="molecule type" value="mRNA"/>
</dbReference>
<dbReference type="EMBL" id="AP002433">
    <property type="status" value="NOT_ANNOTATED_CDS"/>
    <property type="molecule type" value="Genomic_DNA"/>
</dbReference>
<dbReference type="EMBL" id="CH471065">
    <property type="protein sequence ID" value="EAW67104.1"/>
    <property type="molecule type" value="Genomic_DNA"/>
</dbReference>
<dbReference type="EMBL" id="CH471065">
    <property type="protein sequence ID" value="EAW67105.1"/>
    <property type="molecule type" value="Genomic_DNA"/>
</dbReference>
<dbReference type="EMBL" id="BC010942">
    <property type="protein sequence ID" value="AAH10942.1"/>
    <property type="molecule type" value="mRNA"/>
</dbReference>
<dbReference type="CCDS" id="CCDS8339.1">
    <molecule id="P24752-1"/>
</dbReference>
<dbReference type="PIR" id="JH0255">
    <property type="entry name" value="JH0255"/>
</dbReference>
<dbReference type="RefSeq" id="NP_000010.1">
    <molecule id="P24752-1"/>
    <property type="nucleotide sequence ID" value="NM_000019.4"/>
</dbReference>
<dbReference type="PDB" id="2F2S">
    <property type="method" value="X-ray"/>
    <property type="resolution" value="2.00 A"/>
    <property type="chains" value="A/B/C/D=41-427"/>
</dbReference>
<dbReference type="PDB" id="2IB7">
    <property type="method" value="X-ray"/>
    <property type="resolution" value="2.05 A"/>
    <property type="chains" value="A/B/C/D=34-427"/>
</dbReference>
<dbReference type="PDB" id="2IB8">
    <property type="method" value="X-ray"/>
    <property type="resolution" value="1.85 A"/>
    <property type="chains" value="A/B/C/D=34-427"/>
</dbReference>
<dbReference type="PDB" id="2IB9">
    <property type="method" value="X-ray"/>
    <property type="resolution" value="2.05 A"/>
    <property type="chains" value="A/B/C/D=34-427"/>
</dbReference>
<dbReference type="PDB" id="2IBU">
    <property type="method" value="X-ray"/>
    <property type="resolution" value="1.90 A"/>
    <property type="chains" value="A/B/C/D=34-427"/>
</dbReference>
<dbReference type="PDB" id="2IBW">
    <property type="method" value="X-ray"/>
    <property type="resolution" value="1.90 A"/>
    <property type="chains" value="A/B/C/D=34-427"/>
</dbReference>
<dbReference type="PDB" id="2IBY">
    <property type="method" value="X-ray"/>
    <property type="resolution" value="1.85 A"/>
    <property type="chains" value="A/B/C/D=34-427"/>
</dbReference>
<dbReference type="PDBsum" id="2F2S"/>
<dbReference type="PDBsum" id="2IB7"/>
<dbReference type="PDBsum" id="2IB8"/>
<dbReference type="PDBsum" id="2IB9"/>
<dbReference type="PDBsum" id="2IBU"/>
<dbReference type="PDBsum" id="2IBW"/>
<dbReference type="PDBsum" id="2IBY"/>
<dbReference type="SMR" id="P24752"/>
<dbReference type="BioGRID" id="106556">
    <property type="interactions" value="238"/>
</dbReference>
<dbReference type="FunCoup" id="P24752">
    <property type="interactions" value="1731"/>
</dbReference>
<dbReference type="IntAct" id="P24752">
    <property type="interactions" value="56"/>
</dbReference>
<dbReference type="MINT" id="P24752"/>
<dbReference type="STRING" id="9606.ENSP00000265838"/>
<dbReference type="BindingDB" id="P24752"/>
<dbReference type="ChEMBL" id="CHEMBL2616"/>
<dbReference type="DrugBank" id="DB04812">
    <property type="generic name" value="Benoxaprofen"/>
</dbReference>
<dbReference type="DrugBank" id="DB09061">
    <property type="generic name" value="Cannabidiol"/>
</dbReference>
<dbReference type="DrugBank" id="DB14009">
    <property type="generic name" value="Medical Cannabis"/>
</dbReference>
<dbReference type="DrugBank" id="DB14011">
    <property type="generic name" value="Nabiximols"/>
</dbReference>
<dbReference type="DrugBank" id="DB00795">
    <property type="generic name" value="Sulfasalazine"/>
</dbReference>
<dbReference type="DrugCentral" id="P24752"/>
<dbReference type="GuidetoPHARMACOLOGY" id="2435"/>
<dbReference type="SwissLipids" id="SLP:000000701"/>
<dbReference type="GlyGen" id="P24752">
    <property type="glycosylation" value="2 sites, 6 N-linked glycans (1 site), 1 O-linked glycan (1 site)"/>
</dbReference>
<dbReference type="iPTMnet" id="P24752"/>
<dbReference type="MetOSite" id="P24752"/>
<dbReference type="PhosphoSitePlus" id="P24752"/>
<dbReference type="SwissPalm" id="P24752"/>
<dbReference type="BioMuta" id="ACAT1"/>
<dbReference type="DMDM" id="135755"/>
<dbReference type="REPRODUCTION-2DPAGE" id="IPI00030363"/>
<dbReference type="jPOST" id="P24752"/>
<dbReference type="MassIVE" id="P24752"/>
<dbReference type="PaxDb" id="9606-ENSP00000265838"/>
<dbReference type="PeptideAtlas" id="P24752"/>
<dbReference type="ProteomicsDB" id="33702"/>
<dbReference type="ProteomicsDB" id="54224">
    <molecule id="P24752-1"/>
</dbReference>
<dbReference type="Pumba" id="P24752"/>
<dbReference type="TopDownProteomics" id="P24752-1">
    <molecule id="P24752-1"/>
</dbReference>
<dbReference type="Antibodypedia" id="1354">
    <property type="antibodies" value="578 antibodies from 38 providers"/>
</dbReference>
<dbReference type="DNASU" id="38"/>
<dbReference type="Ensembl" id="ENST00000265838.9">
    <molecule id="P24752-1"/>
    <property type="protein sequence ID" value="ENSP00000265838.4"/>
    <property type="gene ID" value="ENSG00000075239.15"/>
</dbReference>
<dbReference type="Ensembl" id="ENST00000299355.10">
    <molecule id="P24752-2"/>
    <property type="protein sequence ID" value="ENSP00000299355.6"/>
    <property type="gene ID" value="ENSG00000075239.15"/>
</dbReference>
<dbReference type="GeneID" id="38"/>
<dbReference type="KEGG" id="hsa:38"/>
<dbReference type="MANE-Select" id="ENST00000265838.9">
    <property type="protein sequence ID" value="ENSP00000265838.4"/>
    <property type="RefSeq nucleotide sequence ID" value="NM_000019.4"/>
    <property type="RefSeq protein sequence ID" value="NP_000010.1"/>
</dbReference>
<dbReference type="UCSC" id="uc001pjw.2">
    <molecule id="P24752-1"/>
    <property type="organism name" value="human"/>
</dbReference>
<dbReference type="AGR" id="HGNC:93"/>
<dbReference type="CTD" id="38"/>
<dbReference type="DisGeNET" id="38"/>
<dbReference type="GeneCards" id="ACAT1"/>
<dbReference type="HGNC" id="HGNC:93">
    <property type="gene designation" value="ACAT1"/>
</dbReference>
<dbReference type="HPA" id="ENSG00000075239">
    <property type="expression patterns" value="Tissue enhanced (kidney, liver)"/>
</dbReference>
<dbReference type="MalaCards" id="ACAT1"/>
<dbReference type="MIM" id="203750">
    <property type="type" value="phenotype"/>
</dbReference>
<dbReference type="MIM" id="607809">
    <property type="type" value="gene"/>
</dbReference>
<dbReference type="neXtProt" id="NX_P24752"/>
<dbReference type="OpenTargets" id="ENSG00000075239"/>
<dbReference type="Orphanet" id="134">
    <property type="disease" value="Beta-ketothiolase deficiency"/>
</dbReference>
<dbReference type="PharmGKB" id="PA24431"/>
<dbReference type="VEuPathDB" id="HostDB:ENSG00000075239"/>
<dbReference type="eggNOG" id="KOG1390">
    <property type="taxonomic scope" value="Eukaryota"/>
</dbReference>
<dbReference type="GeneTree" id="ENSGT01030000234626"/>
<dbReference type="HOGENOM" id="CLU_031026_0_1_1"/>
<dbReference type="InParanoid" id="P24752"/>
<dbReference type="OMA" id="SMGTFGE"/>
<dbReference type="OrthoDB" id="5404651at2759"/>
<dbReference type="PAN-GO" id="P24752">
    <property type="GO annotations" value="3 GO annotations based on evolutionary models"/>
</dbReference>
<dbReference type="PhylomeDB" id="P24752"/>
<dbReference type="TreeFam" id="TF300650"/>
<dbReference type="BioCyc" id="MetaCyc:HS01167-MONOMER"/>
<dbReference type="PathwayCommons" id="P24752"/>
<dbReference type="Reactome" id="R-HSA-70895">
    <property type="pathway name" value="Branched-chain amino acid catabolism"/>
</dbReference>
<dbReference type="Reactome" id="R-HSA-77108">
    <property type="pathway name" value="Utilization of Ketone Bodies"/>
</dbReference>
<dbReference type="Reactome" id="R-HSA-77111">
    <property type="pathway name" value="Synthesis of Ketone Bodies"/>
</dbReference>
<dbReference type="Reactome" id="R-HSA-9837999">
    <property type="pathway name" value="Mitochondrial protein degradation"/>
</dbReference>
<dbReference type="Reactome" id="R-HSA-9854311">
    <property type="pathway name" value="Maturation of TCA enzymes and regulation of TCA cycle"/>
</dbReference>
<dbReference type="Reactome" id="R-HSA-9915355">
    <property type="pathway name" value="Beta-ketothiolase deficiency"/>
</dbReference>
<dbReference type="SABIO-RK" id="P24752"/>
<dbReference type="SignaLink" id="P24752"/>
<dbReference type="SIGNOR" id="P24752"/>
<dbReference type="UniPathway" id="UPA00659"/>
<dbReference type="BioGRID-ORCS" id="38">
    <property type="hits" value="29 hits in 1176 CRISPR screens"/>
</dbReference>
<dbReference type="ChiTaRS" id="ACAT1">
    <property type="organism name" value="human"/>
</dbReference>
<dbReference type="EvolutionaryTrace" id="P24752"/>
<dbReference type="GeneWiki" id="ACAT1"/>
<dbReference type="GenomeRNAi" id="38"/>
<dbReference type="Pharos" id="P24752">
    <property type="development level" value="Tchem"/>
</dbReference>
<dbReference type="PRO" id="PR:P24752"/>
<dbReference type="Proteomes" id="UP000005640">
    <property type="component" value="Chromosome 11"/>
</dbReference>
<dbReference type="RNAct" id="P24752">
    <property type="molecule type" value="protein"/>
</dbReference>
<dbReference type="Bgee" id="ENSG00000075239">
    <property type="expression patterns" value="Expressed in nephron tubule and 208 other cell types or tissues"/>
</dbReference>
<dbReference type="ExpressionAtlas" id="P24752">
    <property type="expression patterns" value="baseline and differential"/>
</dbReference>
<dbReference type="GO" id="GO:0005783">
    <property type="term" value="C:endoplasmic reticulum"/>
    <property type="evidence" value="ECO:0000314"/>
    <property type="project" value="UniProt"/>
</dbReference>
<dbReference type="GO" id="GO:0070062">
    <property type="term" value="C:extracellular exosome"/>
    <property type="evidence" value="ECO:0007005"/>
    <property type="project" value="UniProtKB"/>
</dbReference>
<dbReference type="GO" id="GO:0005759">
    <property type="term" value="C:mitochondrial matrix"/>
    <property type="evidence" value="ECO:0000304"/>
    <property type="project" value="Reactome"/>
</dbReference>
<dbReference type="GO" id="GO:0005739">
    <property type="term" value="C:mitochondrion"/>
    <property type="evidence" value="ECO:0000314"/>
    <property type="project" value="HPA"/>
</dbReference>
<dbReference type="GO" id="GO:0003985">
    <property type="term" value="F:acetyl-CoA C-acetyltransferase activity"/>
    <property type="evidence" value="ECO:0000314"/>
    <property type="project" value="BHF-UCL"/>
</dbReference>
<dbReference type="GO" id="GO:0016453">
    <property type="term" value="F:C-acetyltransferase activity"/>
    <property type="evidence" value="ECO:0000314"/>
    <property type="project" value="BHF-UCL"/>
</dbReference>
<dbReference type="GO" id="GO:0034736">
    <property type="term" value="F:cholesterol O-acyltransferase activity"/>
    <property type="evidence" value="ECO:0000314"/>
    <property type="project" value="UniProt"/>
</dbReference>
<dbReference type="GO" id="GO:0120225">
    <property type="term" value="F:coenzyme A binding"/>
    <property type="evidence" value="ECO:0007669"/>
    <property type="project" value="Ensembl"/>
</dbReference>
<dbReference type="GO" id="GO:0019899">
    <property type="term" value="F:enzyme binding"/>
    <property type="evidence" value="ECO:0007669"/>
    <property type="project" value="Ensembl"/>
</dbReference>
<dbReference type="GO" id="GO:0042802">
    <property type="term" value="F:identical protein binding"/>
    <property type="evidence" value="ECO:0007669"/>
    <property type="project" value="Ensembl"/>
</dbReference>
<dbReference type="GO" id="GO:0030955">
    <property type="term" value="F:potassium ion binding"/>
    <property type="evidence" value="ECO:0000314"/>
    <property type="project" value="BHF-UCL"/>
</dbReference>
<dbReference type="GO" id="GO:0006085">
    <property type="term" value="P:acetyl-CoA biosynthetic process"/>
    <property type="evidence" value="ECO:0000314"/>
    <property type="project" value="BHF-UCL"/>
</dbReference>
<dbReference type="GO" id="GO:0046356">
    <property type="term" value="P:acetyl-CoA catabolic process"/>
    <property type="evidence" value="ECO:0000314"/>
    <property type="project" value="BHF-UCL"/>
</dbReference>
<dbReference type="GO" id="GO:0060612">
    <property type="term" value="P:adipose tissue development"/>
    <property type="evidence" value="ECO:0007669"/>
    <property type="project" value="Ensembl"/>
</dbReference>
<dbReference type="GO" id="GO:0015937">
    <property type="term" value="P:coenzyme A biosynthetic process"/>
    <property type="evidence" value="ECO:0000314"/>
    <property type="project" value="BHF-UCL"/>
</dbReference>
<dbReference type="GO" id="GO:0015936">
    <property type="term" value="P:coenzyme A metabolic process"/>
    <property type="evidence" value="ECO:0000314"/>
    <property type="project" value="BHF-UCL"/>
</dbReference>
<dbReference type="GO" id="GO:0006635">
    <property type="term" value="P:fatty acid beta-oxidation"/>
    <property type="evidence" value="ECO:0007669"/>
    <property type="project" value="UniProtKB-UniPathway"/>
</dbReference>
<dbReference type="GO" id="GO:0006550">
    <property type="term" value="P:isoleucine catabolic process"/>
    <property type="evidence" value="ECO:0000315"/>
    <property type="project" value="BHF-UCL"/>
</dbReference>
<dbReference type="GO" id="GO:0046952">
    <property type="term" value="P:ketone body catabolic process"/>
    <property type="evidence" value="ECO:0000315"/>
    <property type="project" value="BHF-UCL"/>
</dbReference>
<dbReference type="GO" id="GO:1902224">
    <property type="term" value="P:ketone body metabolic process"/>
    <property type="evidence" value="ECO:0000305"/>
    <property type="project" value="BHF-UCL"/>
</dbReference>
<dbReference type="GO" id="GO:0001889">
    <property type="term" value="P:liver development"/>
    <property type="evidence" value="ECO:0007669"/>
    <property type="project" value="Ensembl"/>
</dbReference>
<dbReference type="GO" id="GO:0072229">
    <property type="term" value="P:metanephric proximal convoluted tubule development"/>
    <property type="evidence" value="ECO:0007669"/>
    <property type="project" value="Ensembl"/>
</dbReference>
<dbReference type="GO" id="GO:1902860">
    <property type="term" value="P:propionyl-CoA biosynthetic process"/>
    <property type="evidence" value="ECO:0000314"/>
    <property type="project" value="BHF-UCL"/>
</dbReference>
<dbReference type="GO" id="GO:0009725">
    <property type="term" value="P:response to hormone"/>
    <property type="evidence" value="ECO:0007669"/>
    <property type="project" value="Ensembl"/>
</dbReference>
<dbReference type="GO" id="GO:0042594">
    <property type="term" value="P:response to starvation"/>
    <property type="evidence" value="ECO:0007669"/>
    <property type="project" value="Ensembl"/>
</dbReference>
<dbReference type="CDD" id="cd00751">
    <property type="entry name" value="thiolase"/>
    <property type="match status" value="1"/>
</dbReference>
<dbReference type="FunFam" id="3.40.47.10:FF:000007">
    <property type="entry name" value="acetyl-CoA acetyltransferase, mitochondrial"/>
    <property type="match status" value="1"/>
</dbReference>
<dbReference type="Gene3D" id="3.40.47.10">
    <property type="match status" value="1"/>
</dbReference>
<dbReference type="InterPro" id="IPR002155">
    <property type="entry name" value="Thiolase"/>
</dbReference>
<dbReference type="InterPro" id="IPR016039">
    <property type="entry name" value="Thiolase-like"/>
</dbReference>
<dbReference type="InterPro" id="IPR020615">
    <property type="entry name" value="Thiolase_acyl_enz_int_AS"/>
</dbReference>
<dbReference type="InterPro" id="IPR020610">
    <property type="entry name" value="Thiolase_AS"/>
</dbReference>
<dbReference type="InterPro" id="IPR020617">
    <property type="entry name" value="Thiolase_C"/>
</dbReference>
<dbReference type="InterPro" id="IPR020613">
    <property type="entry name" value="Thiolase_CS"/>
</dbReference>
<dbReference type="InterPro" id="IPR020616">
    <property type="entry name" value="Thiolase_N"/>
</dbReference>
<dbReference type="NCBIfam" id="TIGR01930">
    <property type="entry name" value="AcCoA-C-Actrans"/>
    <property type="match status" value="1"/>
</dbReference>
<dbReference type="PANTHER" id="PTHR18919:SF156">
    <property type="entry name" value="ACETYL-COA ACETYLTRANSFERASE, MITOCHONDRIAL"/>
    <property type="match status" value="1"/>
</dbReference>
<dbReference type="PANTHER" id="PTHR18919">
    <property type="entry name" value="ACETYL-COA C-ACYLTRANSFERASE"/>
    <property type="match status" value="1"/>
</dbReference>
<dbReference type="Pfam" id="PF02803">
    <property type="entry name" value="Thiolase_C"/>
    <property type="match status" value="1"/>
</dbReference>
<dbReference type="Pfam" id="PF00108">
    <property type="entry name" value="Thiolase_N"/>
    <property type="match status" value="1"/>
</dbReference>
<dbReference type="PIRSF" id="PIRSF000429">
    <property type="entry name" value="Ac-CoA_Ac_transf"/>
    <property type="match status" value="1"/>
</dbReference>
<dbReference type="SUPFAM" id="SSF53901">
    <property type="entry name" value="Thiolase-like"/>
    <property type="match status" value="2"/>
</dbReference>
<dbReference type="PROSITE" id="PS00098">
    <property type="entry name" value="THIOLASE_1"/>
    <property type="match status" value="1"/>
</dbReference>
<dbReference type="PROSITE" id="PS00737">
    <property type="entry name" value="THIOLASE_2"/>
    <property type="match status" value="1"/>
</dbReference>
<dbReference type="PROSITE" id="PS00099">
    <property type="entry name" value="THIOLASE_3"/>
    <property type="match status" value="1"/>
</dbReference>
<comment type="function">
    <text evidence="7 8 10 12">This is one of the enzymes that catalyzes the last step of the mitochondrial beta-oxidation pathway, an aerobic process breaking down fatty acids into acetyl-CoA (PubMed:1715688, PubMed:7728148, PubMed:9744475). Using free coenzyme A/CoA, catalyzes the thiolytic cleavage of medium- to long-chain 3-oxoacyl-CoAs into acetyl-CoA and a fatty acyl-CoA shortened by two carbon atoms (PubMed:1715688, PubMed:7728148, PubMed:9744475). The activity of the enzyme is reversible and it can also catalyze the condensation of two acetyl-CoA molecules into acetoacetyl-CoA (PubMed:17371050). Thereby, it plays a major role in ketone body metabolism (PubMed:1715688, PubMed:17371050, PubMed:7728148, PubMed:9744475).</text>
</comment>
<comment type="catalytic activity">
    <reaction evidence="4 7 8 10 12">
        <text>2 acetyl-CoA = acetoacetyl-CoA + CoA</text>
        <dbReference type="Rhea" id="RHEA:21036"/>
        <dbReference type="ChEBI" id="CHEBI:57286"/>
        <dbReference type="ChEBI" id="CHEBI:57287"/>
        <dbReference type="ChEBI" id="CHEBI:57288"/>
        <dbReference type="EC" id="2.3.1.9"/>
    </reaction>
    <physiologicalReaction direction="left-to-right" evidence="8">
        <dbReference type="Rhea" id="RHEA:21037"/>
    </physiologicalReaction>
    <physiologicalReaction direction="right-to-left" evidence="7 8 10 12">
        <dbReference type="Rhea" id="RHEA:21038"/>
    </physiologicalReaction>
</comment>
<comment type="catalytic activity">
    <reaction evidence="8">
        <text>propanoyl-CoA + acetyl-CoA = 2-methyl-3-oxobutanoyl-CoA + CoA</text>
        <dbReference type="Rhea" id="RHEA:30719"/>
        <dbReference type="ChEBI" id="CHEBI:57287"/>
        <dbReference type="ChEBI" id="CHEBI:57288"/>
        <dbReference type="ChEBI" id="CHEBI:57335"/>
        <dbReference type="ChEBI" id="CHEBI:57392"/>
    </reaction>
    <physiologicalReaction direction="left-to-right" evidence="15">
        <dbReference type="Rhea" id="RHEA:30720"/>
    </physiologicalReaction>
    <physiologicalReaction direction="right-to-left" evidence="15">
        <dbReference type="Rhea" id="RHEA:30721"/>
    </physiologicalReaction>
</comment>
<comment type="activity regulation">
    <text evidence="8">Activated by potassium ions, but not sodium ions.</text>
</comment>
<comment type="biophysicochemical properties">
    <kinetics>
        <KM evidence="8">4 uM for acetoacetyl-CoA (at 25 degrees Celsius in the presence of 40 mM KCl)</KM>
        <KM evidence="8">8 uM for acetoacetyl-CoA (at 25 degrees Celsius in the presence of 40 mM NaCl)</KM>
        <KM evidence="8">20 uM for CoA (at 25 degrees Celsius in the presence of 40 mM KCl)</KM>
        <KM evidence="8">66 uM for CoA (at 25 degrees Celsius in the presence of 40 mM NaCl)</KM>
        <KM evidence="8">8 uM for 2-methyl-3-oxobutanoyl-CoA (at 25 degrees Celsius in the presence of 40 mM KCl)</KM>
        <KM evidence="8">8 uM for 2-methyl-3-oxobutanoyl-CoA (at 25 degrees Celsius in the presence of 40 mM NaCl)</KM>
        <KM evidence="8">508 uM for acetyl-CoA (at 25 degrees Celsius in the presence of 40 mM KCl)</KM>
        <text evidence="8">kcat is 21 sec(-1) for the degradation of acetoacetyl-CoA (at 25 degrees Celsius in the presence of 40 mM KCl) (PubMed:17371050). kcat is 8 sec(-1) for the degradation of acetoacetyl-CoA (at 25 degrees Celsius in the presence of 40 mM NaCl) (PubMed:17371050). kcat is 61 sec(-1) for the degradation of 2-methylacetoacetyl-CoA (at 25 degrees Celsius in the presence of 40 mM KCl) (PubMed:17371050). kcat is 14 sec(-1) for the degradation of 2-methylacetoacetyl-CoA (at 25 degrees Celsius in the presence of 40 mM NaCl) (PubMed:17371050). kcat is 3.5 sec(-1) for the synthesis of acetoacetyl-CoA (at 25 degrees Celsius in the presence of 40 mM KCl) (PubMed:17371050).</text>
    </kinetics>
</comment>
<comment type="pathway">
    <text evidence="7 10 12">Lipid metabolism; fatty acid beta-oxidation.</text>
</comment>
<comment type="subunit">
    <text evidence="8">Homotetramer.</text>
</comment>
<comment type="subcellular location">
    <subcellularLocation>
        <location evidence="9">Mitochondrion</location>
    </subcellularLocation>
</comment>
<comment type="alternative products">
    <event type="alternative splicing"/>
    <isoform>
        <id>P24752-1</id>
        <name>1</name>
        <sequence type="displayed"/>
    </isoform>
    <isoform>
        <id>P24752-2</id>
        <name>2</name>
        <sequence type="described" ref="VSP_056844 VSP_056845"/>
    </isoform>
</comment>
<comment type="PTM">
    <text evidence="1">Succinylation at Lys-268, adjacent to a coenzyme A binding site. Desuccinylated by SIRT5 (By similarity).</text>
</comment>
<comment type="disease" evidence="5 7 10 11 12">
    <disease id="DI-00009">
        <name>3-ketothiolase deficiency</name>
        <acronym>3KTD</acronym>
        <description>An autosomal recessive inborn error of isoleucine catabolism characterized by intermittent ketoacidotic attacks associated with unconsciousness. Some patients die during an attack or are mentally retarded. Urinary excretion of 2-methyl-3-hydroxybutyric acid, 2-methylacetoacetic acid, triglylglycine, butanone is increased. It seems likely that the severity of this disease correlates better with the environmental or acquired factors than with the ACAT1 genotype.</description>
        <dbReference type="MIM" id="203750"/>
    </disease>
    <text>The disease is caused by variants affecting the gene represented in this entry.</text>
</comment>
<comment type="similarity">
    <text evidence="14">Belongs to the thiolase-like superfamily. Thiolase family.</text>
</comment>
<accession>P24752</accession>
<accession>B2R6H1</accession>
<accession>G3XAB4</accession>
<accession>Q96FG8</accession>
<protein>
    <recommendedName>
        <fullName>Acetyl-CoA acetyltransferase, mitochondrial</fullName>
        <ecNumber evidence="4 7 8 10 12">2.3.1.9</ecNumber>
    </recommendedName>
    <alternativeName>
        <fullName>Acetoacetyl-CoA thiolase</fullName>
    </alternativeName>
    <alternativeName>
        <fullName>T2</fullName>
    </alternativeName>
</protein>
<gene>
    <name type="primary">ACAT1</name>
    <name type="synonym">ACAT</name>
    <name type="synonym">MAT</name>
</gene>
<feature type="transit peptide" description="Mitochondrion" evidence="2">
    <location>
        <begin position="1"/>
        <end position="33"/>
    </location>
</feature>
<feature type="chain" id="PRO_0000034085" description="Acetyl-CoA acetyltransferase, mitochondrial">
    <location>
        <begin position="34"/>
        <end position="427"/>
    </location>
</feature>
<feature type="active site" description="Acyl-thioester intermediate" evidence="15">
    <location>
        <position position="126"/>
    </location>
</feature>
<feature type="active site" description="Proton donor/acceptor" evidence="15">
    <location>
        <position position="413"/>
    </location>
</feature>
<feature type="binding site" evidence="8">
    <location>
        <position position="219"/>
    </location>
    <ligand>
        <name>CoA</name>
        <dbReference type="ChEBI" id="CHEBI:57287"/>
    </ligand>
</feature>
<feature type="binding site" evidence="8">
    <location>
        <position position="219"/>
    </location>
    <ligand>
        <name>K(+)</name>
        <dbReference type="ChEBI" id="CHEBI:29103"/>
    </ligand>
</feature>
<feature type="binding site" evidence="8">
    <location>
        <begin position="258"/>
        <end position="260"/>
    </location>
    <ligand>
        <name>CoA</name>
        <dbReference type="ChEBI" id="CHEBI:57287"/>
    </ligand>
</feature>
<feature type="binding site" evidence="8">
    <location>
        <position position="263"/>
    </location>
    <ligand>
        <name>CoA</name>
        <dbReference type="ChEBI" id="CHEBI:57287"/>
    </ligand>
</feature>
<feature type="binding site" evidence="8">
    <location>
        <position position="280"/>
    </location>
    <ligand>
        <name>K(+)</name>
        <dbReference type="ChEBI" id="CHEBI:29103"/>
    </ligand>
</feature>
<feature type="binding site" evidence="8">
    <location>
        <position position="281"/>
    </location>
    <ligand>
        <name>K(+)</name>
        <dbReference type="ChEBI" id="CHEBI:29103"/>
    </ligand>
</feature>
<feature type="binding site" evidence="8">
    <location>
        <position position="283"/>
    </location>
    <ligand>
        <name>K(+)</name>
        <dbReference type="ChEBI" id="CHEBI:29103"/>
    </ligand>
</feature>
<feature type="binding site" evidence="8">
    <location>
        <position position="284"/>
    </location>
    <ligand>
        <name>CoA</name>
        <dbReference type="ChEBI" id="CHEBI:57287"/>
    </ligand>
</feature>
<feature type="binding site" evidence="8">
    <location>
        <position position="381"/>
    </location>
    <ligand>
        <name>K(+)</name>
        <dbReference type="ChEBI" id="CHEBI:29103"/>
    </ligand>
</feature>
<feature type="site" description="Increases nucleophilicity of active site Cys" evidence="15">
    <location>
        <position position="385"/>
    </location>
</feature>
<feature type="modified residue" description="N6-acetyllysine; alternate" evidence="3">
    <location>
        <position position="66"/>
    </location>
</feature>
<feature type="modified residue" description="N6-succinyllysine; alternate" evidence="3">
    <location>
        <position position="66"/>
    </location>
</feature>
<feature type="modified residue" description="N6-succinyllysine" evidence="3">
    <location>
        <position position="78"/>
    </location>
</feature>
<feature type="modified residue" description="N6-acetyllysine; alternate" evidence="16">
    <location>
        <position position="174"/>
    </location>
</feature>
<feature type="modified residue" description="N6-succinyllysine; alternate" evidence="3">
    <location>
        <position position="174"/>
    </location>
</feature>
<feature type="modified residue" description="N6-acetyllysine; alternate" evidence="16">
    <location>
        <position position="181"/>
    </location>
</feature>
<feature type="modified residue" description="N6-succinyllysine; alternate" evidence="3">
    <location>
        <position position="181"/>
    </location>
</feature>
<feature type="modified residue" description="N6-acetyllysine; alternate" evidence="3">
    <location>
        <position position="190"/>
    </location>
</feature>
<feature type="modified residue" description="N6-succinyllysine; alternate" evidence="3">
    <location>
        <position position="190"/>
    </location>
</feature>
<feature type="modified residue" description="N6-acetyllysine; alternate" evidence="3">
    <location>
        <position position="202"/>
    </location>
</feature>
<feature type="modified residue" description="N6-succinyllysine; alternate" evidence="3">
    <location>
        <position position="202"/>
    </location>
</feature>
<feature type="modified residue" description="N6-acetyllysine; alternate" evidence="3">
    <location>
        <position position="223"/>
    </location>
</feature>
<feature type="modified residue" description="N6-succinyllysine; alternate" evidence="3">
    <location>
        <position position="223"/>
    </location>
</feature>
<feature type="modified residue" description="N6-acetyllysine; alternate" evidence="3">
    <location>
        <position position="230"/>
    </location>
</feature>
<feature type="modified residue" description="N6-succinyllysine; alternate" evidence="3">
    <location>
        <position position="230"/>
    </location>
</feature>
<feature type="modified residue" description="N6-succinyllysine" evidence="3">
    <location>
        <position position="243"/>
    </location>
</feature>
<feature type="modified residue" description="N6-acetyllysine" evidence="16">
    <location>
        <position position="251"/>
    </location>
</feature>
<feature type="modified residue" description="N6-acetyllysine" evidence="3">
    <location>
        <position position="257"/>
    </location>
</feature>
<feature type="modified residue" description="N6-acetyllysine; alternate" evidence="16">
    <location>
        <position position="263"/>
    </location>
</feature>
<feature type="modified residue" description="N6-succinyllysine; alternate" evidence="3">
    <location>
        <position position="263"/>
    </location>
</feature>
<feature type="modified residue" description="N6-succinyllysine" evidence="3">
    <location>
        <position position="266"/>
    </location>
</feature>
<feature type="modified residue" description="N6-succinyllysine" evidence="3">
    <location>
        <position position="268"/>
    </location>
</feature>
<feature type="modified residue" description="N6-acetyllysine" evidence="3">
    <location>
        <position position="273"/>
    </location>
</feature>
<feature type="modified residue" description="N6-acetyllysine" evidence="3">
    <location>
        <position position="338"/>
    </location>
</feature>
<feature type="splice variant" id="VSP_056844" description="In isoform 2." evidence="13">
    <original>DVMVAGGMESMSNVPYV</original>
    <variation>IKQETGSLAKICCHVRR</variation>
    <location>
        <begin position="146"/>
        <end position="162"/>
    </location>
</feature>
<feature type="splice variant" id="VSP_056845" description="In isoform 2." evidence="13">
    <location>
        <begin position="163"/>
        <end position="427"/>
    </location>
</feature>
<feature type="sequence variant" id="VAR_007496" description="In dbSNP:rs3741056." evidence="6">
    <original>A</original>
    <variation>P</variation>
    <location>
        <position position="5"/>
    </location>
</feature>
<feature type="sequence variant" id="VAR_007497" description="In 3KTD.">
    <location>
        <position position="85"/>
    </location>
</feature>
<feature type="sequence variant" id="VAR_007498" description="In 3KTD; decreased acetyl-CoA C-acyltransferase activity; less than 10% of the degradative/thiolase activity; dbSNP:rs120074145." evidence="12">
    <original>N</original>
    <variation>S</variation>
    <location>
        <position position="93"/>
    </location>
</feature>
<feature type="sequence variant" id="VAR_007499" description="In 3KTD; dbSNP:rs762991875." evidence="11">
    <original>G</original>
    <variation>A</variation>
    <location>
        <position position="152"/>
    </location>
</feature>
<feature type="sequence variant" id="VAR_007500" description="In 3KTD; loss of acetyl-CoA C-acyltransferase activity; no degradative/thiolase activity; dbSNP:rs148639841." evidence="10">
    <original>N</original>
    <variation>D</variation>
    <location>
        <position position="158"/>
    </location>
</feature>
<feature type="sequence variant" id="VAR_007501" description="In 3KTD; no activity; dbSNP:rs120074141." evidence="5">
    <original>G</original>
    <variation>R</variation>
    <location>
        <position position="183"/>
    </location>
</feature>
<feature type="sequence variant" id="VAR_007502" description="In 3KTD; decreased protein abundance; decreased acetyl-CoA C-acyltransferase activity; less than 10% of the degradative/thiolase activity; dbSNP:rs886041122." evidence="10">
    <original>T</original>
    <variation>M</variation>
    <location>
        <position position="297"/>
    </location>
</feature>
<feature type="sequence variant" id="VAR_007503" description="In 3KTD; loss of acetyl-CoA C-acyltransferase activity; no degradative/thiolase activity; dbSNP:rs1420321267." evidence="10">
    <original>A</original>
    <variation>P</variation>
    <location>
        <position position="301"/>
    </location>
</feature>
<feature type="sequence variant" id="VAR_007504" description="In 3KTD; decreased protein stability; decreased acetyl-CoA C-acyltransferase activity; less than 10% of the degradative/thiolase activity; dbSNP:rs120074146." evidence="12">
    <original>I</original>
    <variation>T</variation>
    <location>
        <position position="312"/>
    </location>
</feature>
<feature type="sequence variant" id="VAR_007505" description="In 3KTD; loss of protein solubility; loss of acetyl-CoA C-acyltransferase activity; no degradative/thiolase activity; dbSNP:rs120074147." evidence="12">
    <original>A</original>
    <variation>P</variation>
    <location>
        <position position="333"/>
    </location>
</feature>
<feature type="sequence variant" id="VAR_007506" description="In 3KTD; dbSNP:rs120074143." evidence="11">
    <original>G</original>
    <variation>V</variation>
    <location>
        <position position="379"/>
    </location>
</feature>
<feature type="sequence variant" id="VAR_007507" description="In 3KTD; decreased protein stability; dbSNP:rs120074140." evidence="7">
    <original>A</original>
    <variation>T</variation>
    <location>
        <position position="380"/>
    </location>
</feature>
<feature type="sequence conflict" description="In Ref. 2; BAA01387." evidence="14" ref="2">
    <original>V</original>
    <variation>M</variation>
    <location>
        <position position="340"/>
    </location>
</feature>
<feature type="sequence conflict" description="In Ref. 2; BAA01387." evidence="14" ref="2">
    <original>D</original>
    <variation>N</variation>
    <location>
        <position position="346"/>
    </location>
</feature>
<feature type="sequence conflict" description="In Ref. 2; BAA01387." evidence="14" ref="2">
    <original>A</original>
    <variation>S</variation>
    <location>
        <position position="380"/>
    </location>
</feature>
<feature type="sequence conflict" description="In Ref. 2; BAA01387." evidence="14" ref="2">
    <original>I</original>
    <variation>F</variation>
    <location>
        <position position="412"/>
    </location>
</feature>
<feature type="strand" evidence="17">
    <location>
        <begin position="42"/>
        <end position="49"/>
    </location>
</feature>
<feature type="turn" evidence="17">
    <location>
        <begin position="58"/>
        <end position="61"/>
    </location>
</feature>
<feature type="helix" evidence="17">
    <location>
        <begin position="64"/>
        <end position="79"/>
    </location>
</feature>
<feature type="helix" evidence="17">
    <location>
        <begin position="83"/>
        <end position="85"/>
    </location>
</feature>
<feature type="strand" evidence="17">
    <location>
        <begin position="88"/>
        <end position="92"/>
    </location>
</feature>
<feature type="helix" evidence="17">
    <location>
        <begin position="103"/>
        <end position="110"/>
    </location>
</feature>
<feature type="strand" evidence="17">
    <location>
        <begin position="119"/>
        <end position="123"/>
    </location>
</feature>
<feature type="helix" evidence="17">
    <location>
        <begin position="125"/>
        <end position="127"/>
    </location>
</feature>
<feature type="helix" evidence="17">
    <location>
        <begin position="128"/>
        <end position="141"/>
    </location>
</feature>
<feature type="strand" evidence="17">
    <location>
        <begin position="146"/>
        <end position="155"/>
    </location>
</feature>
<feature type="helix" evidence="17">
    <location>
        <begin position="156"/>
        <end position="158"/>
    </location>
</feature>
<feature type="strand" evidence="17">
    <location>
        <begin position="161"/>
        <end position="163"/>
    </location>
</feature>
<feature type="strand" evidence="17">
    <location>
        <begin position="165"/>
        <end position="167"/>
    </location>
</feature>
<feature type="strand" evidence="17">
    <location>
        <begin position="173"/>
        <end position="177"/>
    </location>
</feature>
<feature type="helix" evidence="17">
    <location>
        <begin position="178"/>
        <end position="182"/>
    </location>
</feature>
<feature type="turn" evidence="17">
    <location>
        <begin position="187"/>
        <end position="190"/>
    </location>
</feature>
<feature type="helix" evidence="17">
    <location>
        <begin position="193"/>
        <end position="204"/>
    </location>
</feature>
<feature type="helix" evidence="17">
    <location>
        <begin position="208"/>
        <end position="227"/>
    </location>
</feature>
<feature type="turn" evidence="17">
    <location>
        <begin position="228"/>
        <end position="234"/>
    </location>
</feature>
<feature type="strand" evidence="17">
    <location>
        <begin position="238"/>
        <end position="240"/>
    </location>
</feature>
<feature type="strand" evidence="17">
    <location>
        <begin position="248"/>
        <end position="250"/>
    </location>
</feature>
<feature type="helix" evidence="17">
    <location>
        <begin position="255"/>
        <end position="257"/>
    </location>
</feature>
<feature type="turn" evidence="17">
    <location>
        <begin position="261"/>
        <end position="263"/>
    </location>
</feature>
<feature type="helix" evidence="17">
    <location>
        <begin position="264"/>
        <end position="266"/>
    </location>
</feature>
<feature type="strand" evidence="17">
    <location>
        <begin position="273"/>
        <end position="275"/>
    </location>
</feature>
<feature type="turn" evidence="17">
    <location>
        <begin position="280"/>
        <end position="282"/>
    </location>
</feature>
<feature type="strand" evidence="17">
    <location>
        <begin position="287"/>
        <end position="297"/>
    </location>
</feature>
<feature type="helix" evidence="17">
    <location>
        <begin position="298"/>
        <end position="303"/>
    </location>
</feature>
<feature type="strand" evidence="17">
    <location>
        <begin position="310"/>
        <end position="319"/>
    </location>
</feature>
<feature type="helix" evidence="17">
    <location>
        <begin position="322"/>
        <end position="327"/>
    </location>
</feature>
<feature type="helix" evidence="17">
    <location>
        <begin position="328"/>
        <end position="340"/>
    </location>
</feature>
<feature type="helix" evidence="17">
    <location>
        <begin position="344"/>
        <end position="346"/>
    </location>
</feature>
<feature type="strand" evidence="17">
    <location>
        <begin position="347"/>
        <end position="352"/>
    </location>
</feature>
<feature type="helix" evidence="17">
    <location>
        <begin position="357"/>
        <end position="367"/>
    </location>
</feature>
<feature type="helix" evidence="17">
    <location>
        <begin position="371"/>
        <end position="373"/>
    </location>
</feature>
<feature type="helix" evidence="17">
    <location>
        <begin position="380"/>
        <end position="383"/>
    </location>
</feature>
<feature type="turn" evidence="17">
    <location>
        <begin position="387"/>
        <end position="389"/>
    </location>
</feature>
<feature type="helix" evidence="17">
    <location>
        <begin position="390"/>
        <end position="401"/>
    </location>
</feature>
<feature type="strand" evidence="17">
    <location>
        <begin position="407"/>
        <end position="414"/>
    </location>
</feature>
<feature type="turn" evidence="17">
    <location>
        <begin position="415"/>
        <end position="417"/>
    </location>
</feature>
<feature type="strand" evidence="17">
    <location>
        <begin position="418"/>
        <end position="426"/>
    </location>
</feature>
<sequence>MAVLAALLRSGARSRSPLLRRLVQEIRYVERSYVSKPTLKEVVIVSATRTPIGSFLGSLSLLPATKLGSIAIQGAIEKAGIPKEEVKEAYMGNVLQGGEGQAPTRQAVLGAGLPISTPCTTINKVCASGMKAIMMASQSLMCGHQDVMVAGGMESMSNVPYVMNRGSTPYGGVKLEDLIVKDGLTDVYNKIHMGSCAENTAKKLNIARNEQDAYAINSYTRSKAAWEAGKFGNEVIPVTVTVKGQPDVVVKEDEEYKRVDFSKVPKLKTVFQKENGTVTAANASTLNDGAAALVLMTADAAKRLNVTPLARIVAFADAAVEPIDFPIAPVYAASMVLKDVGLKKEDIAMWEVNEAFSLVVLANIKMLEIDPQKVNINGGAVSLGHPIGMSGARIVGHLTHALKQGEYGLASICNGGGGASAMLIQKL</sequence>
<keyword id="KW-0002">3D-structure</keyword>
<keyword id="KW-0007">Acetylation</keyword>
<keyword id="KW-0012">Acyltransferase</keyword>
<keyword id="KW-0025">Alternative splicing</keyword>
<keyword id="KW-0903">Direct protein sequencing</keyword>
<keyword id="KW-0225">Disease variant</keyword>
<keyword id="KW-0276">Fatty acid metabolism</keyword>
<keyword id="KW-0443">Lipid metabolism</keyword>
<keyword id="KW-0479">Metal-binding</keyword>
<keyword id="KW-0496">Mitochondrion</keyword>
<keyword id="KW-0630">Potassium</keyword>
<keyword id="KW-1267">Proteomics identification</keyword>
<keyword id="KW-1185">Reference proteome</keyword>
<keyword id="KW-0808">Transferase</keyword>
<keyword id="KW-0809">Transit peptide</keyword>
<evidence type="ECO:0000250" key="1"/>
<evidence type="ECO:0000250" key="2">
    <source>
        <dbReference type="UniProtKB" id="P17764"/>
    </source>
</evidence>
<evidence type="ECO:0000250" key="3">
    <source>
        <dbReference type="UniProtKB" id="Q8QZT1"/>
    </source>
</evidence>
<evidence type="ECO:0000255" key="4">
    <source>
        <dbReference type="PROSITE-ProRule" id="PRU10020"/>
    </source>
</evidence>
<evidence type="ECO:0000269" key="5">
    <source>
    </source>
</evidence>
<evidence type="ECO:0000269" key="6">
    <source>
    </source>
</evidence>
<evidence type="ECO:0000269" key="7">
    <source>
    </source>
</evidence>
<evidence type="ECO:0000269" key="8">
    <source>
    </source>
</evidence>
<evidence type="ECO:0000269" key="9">
    <source>
    </source>
</evidence>
<evidence type="ECO:0000269" key="10">
    <source>
    </source>
</evidence>
<evidence type="ECO:0000269" key="11">
    <source>
    </source>
</evidence>
<evidence type="ECO:0000269" key="12">
    <source>
    </source>
</evidence>
<evidence type="ECO:0000303" key="13">
    <source>
    </source>
</evidence>
<evidence type="ECO:0000305" key="14"/>
<evidence type="ECO:0000305" key="15">
    <source>
    </source>
</evidence>
<evidence type="ECO:0007744" key="16">
    <source>
    </source>
</evidence>
<evidence type="ECO:0007829" key="17">
    <source>
        <dbReference type="PDB" id="2IB8"/>
    </source>
</evidence>
<name>THIL_HUMAN</name>
<proteinExistence type="evidence at protein level"/>
<reference key="1">
    <citation type="journal article" date="1990" name="J. Clin. Invest.">
        <title>Molecular cloning and sequence of the complementary DNA encoding human mitochondrial acetoacetyl-coenzyme A thiolase and study of the variant enzymes in cultured fibroblasts from patients with 3-ketothiolase deficiency.</title>
        <authorList>
            <person name="Fukao T."/>
            <person name="Yamaguchi S."/>
            <person name="Kano M."/>
            <person name="Orii T."/>
            <person name="Fujiki Y."/>
            <person name="Osumi T."/>
            <person name="Hashimoto T."/>
        </authorList>
    </citation>
    <scope>NUCLEOTIDE SEQUENCE [MRNA] (ISOFORM 1)</scope>
    <scope>SUBCELLULAR LOCATION</scope>
</reference>
<reference key="2">
    <citation type="journal article" date="1991" name="Gene">
        <title>Structure and expression of the human mitochondrial acetoacetyl-CoA thiolase-encoding gene.</title>
        <authorList>
            <person name="Kano M."/>
            <person name="Fukao T."/>
            <person name="Yamaguchi S."/>
            <person name="Orii T."/>
            <person name="Osumi T."/>
            <person name="Hashimoto T."/>
        </authorList>
    </citation>
    <scope>NUCLEOTIDE SEQUENCE [GENOMIC DNA]</scope>
</reference>
<reference key="3">
    <citation type="journal article" date="2004" name="Nat. Genet.">
        <title>Complete sequencing and characterization of 21,243 full-length human cDNAs.</title>
        <authorList>
            <person name="Ota T."/>
            <person name="Suzuki Y."/>
            <person name="Nishikawa T."/>
            <person name="Otsuki T."/>
            <person name="Sugiyama T."/>
            <person name="Irie R."/>
            <person name="Wakamatsu A."/>
            <person name="Hayashi K."/>
            <person name="Sato H."/>
            <person name="Nagai K."/>
            <person name="Kimura K."/>
            <person name="Makita H."/>
            <person name="Sekine M."/>
            <person name="Obayashi M."/>
            <person name="Nishi T."/>
            <person name="Shibahara T."/>
            <person name="Tanaka T."/>
            <person name="Ishii S."/>
            <person name="Yamamoto J."/>
            <person name="Saito K."/>
            <person name="Kawai Y."/>
            <person name="Isono Y."/>
            <person name="Nakamura Y."/>
            <person name="Nagahari K."/>
            <person name="Murakami K."/>
            <person name="Yasuda T."/>
            <person name="Iwayanagi T."/>
            <person name="Wagatsuma M."/>
            <person name="Shiratori A."/>
            <person name="Sudo H."/>
            <person name="Hosoiri T."/>
            <person name="Kaku Y."/>
            <person name="Kodaira H."/>
            <person name="Kondo H."/>
            <person name="Sugawara M."/>
            <person name="Takahashi M."/>
            <person name="Kanda K."/>
            <person name="Yokoi T."/>
            <person name="Furuya T."/>
            <person name="Kikkawa E."/>
            <person name="Omura Y."/>
            <person name="Abe K."/>
            <person name="Kamihara K."/>
            <person name="Katsuta N."/>
            <person name="Sato K."/>
            <person name="Tanikawa M."/>
            <person name="Yamazaki M."/>
            <person name="Ninomiya K."/>
            <person name="Ishibashi T."/>
            <person name="Yamashita H."/>
            <person name="Murakawa K."/>
            <person name="Fujimori K."/>
            <person name="Tanai H."/>
            <person name="Kimata M."/>
            <person name="Watanabe M."/>
            <person name="Hiraoka S."/>
            <person name="Chiba Y."/>
            <person name="Ishida S."/>
            <person name="Ono Y."/>
            <person name="Takiguchi S."/>
            <person name="Watanabe S."/>
            <person name="Yosida M."/>
            <person name="Hotuta T."/>
            <person name="Kusano J."/>
            <person name="Kanehori K."/>
            <person name="Takahashi-Fujii A."/>
            <person name="Hara H."/>
            <person name="Tanase T.-O."/>
            <person name="Nomura Y."/>
            <person name="Togiya S."/>
            <person name="Komai F."/>
            <person name="Hara R."/>
            <person name="Takeuchi K."/>
            <person name="Arita M."/>
            <person name="Imose N."/>
            <person name="Musashino K."/>
            <person name="Yuuki H."/>
            <person name="Oshima A."/>
            <person name="Sasaki N."/>
            <person name="Aotsuka S."/>
            <person name="Yoshikawa Y."/>
            <person name="Matsunawa H."/>
            <person name="Ichihara T."/>
            <person name="Shiohata N."/>
            <person name="Sano S."/>
            <person name="Moriya S."/>
            <person name="Momiyama H."/>
            <person name="Satoh N."/>
            <person name="Takami S."/>
            <person name="Terashima Y."/>
            <person name="Suzuki O."/>
            <person name="Nakagawa S."/>
            <person name="Senoh A."/>
            <person name="Mizoguchi H."/>
            <person name="Goto Y."/>
            <person name="Shimizu F."/>
            <person name="Wakebe H."/>
            <person name="Hishigaki H."/>
            <person name="Watanabe T."/>
            <person name="Sugiyama A."/>
            <person name="Takemoto M."/>
            <person name="Kawakami B."/>
            <person name="Yamazaki M."/>
            <person name="Watanabe K."/>
            <person name="Kumagai A."/>
            <person name="Itakura S."/>
            <person name="Fukuzumi Y."/>
            <person name="Fujimori Y."/>
            <person name="Komiyama M."/>
            <person name="Tashiro H."/>
            <person name="Tanigami A."/>
            <person name="Fujiwara T."/>
            <person name="Ono T."/>
            <person name="Yamada K."/>
            <person name="Fujii Y."/>
            <person name="Ozaki K."/>
            <person name="Hirao M."/>
            <person name="Ohmori Y."/>
            <person name="Kawabata A."/>
            <person name="Hikiji T."/>
            <person name="Kobatake N."/>
            <person name="Inagaki H."/>
            <person name="Ikema Y."/>
            <person name="Okamoto S."/>
            <person name="Okitani R."/>
            <person name="Kawakami T."/>
            <person name="Noguchi S."/>
            <person name="Itoh T."/>
            <person name="Shigeta K."/>
            <person name="Senba T."/>
            <person name="Matsumura K."/>
            <person name="Nakajima Y."/>
            <person name="Mizuno T."/>
            <person name="Morinaga M."/>
            <person name="Sasaki M."/>
            <person name="Togashi T."/>
            <person name="Oyama M."/>
            <person name="Hata H."/>
            <person name="Watanabe M."/>
            <person name="Komatsu T."/>
            <person name="Mizushima-Sugano J."/>
            <person name="Satoh T."/>
            <person name="Shirai Y."/>
            <person name="Takahashi Y."/>
            <person name="Nakagawa K."/>
            <person name="Okumura K."/>
            <person name="Nagase T."/>
            <person name="Nomura N."/>
            <person name="Kikuchi H."/>
            <person name="Masuho Y."/>
            <person name="Yamashita R."/>
            <person name="Nakai K."/>
            <person name="Yada T."/>
            <person name="Nakamura Y."/>
            <person name="Ohara O."/>
            <person name="Isogai T."/>
            <person name="Sugano S."/>
        </authorList>
    </citation>
    <scope>NUCLEOTIDE SEQUENCE [LARGE SCALE MRNA] (ISOFORM 1)</scope>
    <source>
        <tissue>Brain</tissue>
    </source>
</reference>
<reference key="4">
    <citation type="journal article" date="2006" name="Nature">
        <title>Human chromosome 11 DNA sequence and analysis including novel gene identification.</title>
        <authorList>
            <person name="Taylor T.D."/>
            <person name="Noguchi H."/>
            <person name="Totoki Y."/>
            <person name="Toyoda A."/>
            <person name="Kuroki Y."/>
            <person name="Dewar K."/>
            <person name="Lloyd C."/>
            <person name="Itoh T."/>
            <person name="Takeda T."/>
            <person name="Kim D.-W."/>
            <person name="She X."/>
            <person name="Barlow K.F."/>
            <person name="Bloom T."/>
            <person name="Bruford E."/>
            <person name="Chang J.L."/>
            <person name="Cuomo C.A."/>
            <person name="Eichler E."/>
            <person name="FitzGerald M.G."/>
            <person name="Jaffe D.B."/>
            <person name="LaButti K."/>
            <person name="Nicol R."/>
            <person name="Park H.-S."/>
            <person name="Seaman C."/>
            <person name="Sougnez C."/>
            <person name="Yang X."/>
            <person name="Zimmer A.R."/>
            <person name="Zody M.C."/>
            <person name="Birren B.W."/>
            <person name="Nusbaum C."/>
            <person name="Fujiyama A."/>
            <person name="Hattori M."/>
            <person name="Rogers J."/>
            <person name="Lander E.S."/>
            <person name="Sakaki Y."/>
        </authorList>
    </citation>
    <scope>NUCLEOTIDE SEQUENCE [LARGE SCALE GENOMIC DNA]</scope>
</reference>
<reference key="5">
    <citation type="submission" date="2005-07" db="EMBL/GenBank/DDBJ databases">
        <authorList>
            <person name="Mural R.J."/>
            <person name="Istrail S."/>
            <person name="Sutton G.G."/>
            <person name="Florea L."/>
            <person name="Halpern A.L."/>
            <person name="Mobarry C.M."/>
            <person name="Lippert R."/>
            <person name="Walenz B."/>
            <person name="Shatkay H."/>
            <person name="Dew I."/>
            <person name="Miller J.R."/>
            <person name="Flanigan M.J."/>
            <person name="Edwards N.J."/>
            <person name="Bolanos R."/>
            <person name="Fasulo D."/>
            <person name="Halldorsson B.V."/>
            <person name="Hannenhalli S."/>
            <person name="Turner R."/>
            <person name="Yooseph S."/>
            <person name="Lu F."/>
            <person name="Nusskern D.R."/>
            <person name="Shue B.C."/>
            <person name="Zheng X.H."/>
            <person name="Zhong F."/>
            <person name="Delcher A.L."/>
            <person name="Huson D.H."/>
            <person name="Kravitz S.A."/>
            <person name="Mouchard L."/>
            <person name="Reinert K."/>
            <person name="Remington K.A."/>
            <person name="Clark A.G."/>
            <person name="Waterman M.S."/>
            <person name="Eichler E.E."/>
            <person name="Adams M.D."/>
            <person name="Hunkapiller M.W."/>
            <person name="Myers E.W."/>
            <person name="Venter J.C."/>
        </authorList>
    </citation>
    <scope>NUCLEOTIDE SEQUENCE [LARGE SCALE GENOMIC DNA]</scope>
</reference>
<reference key="6">
    <citation type="journal article" date="2004" name="Genome Res.">
        <title>The status, quality, and expansion of the NIH full-length cDNA project: the Mammalian Gene Collection (MGC).</title>
        <authorList>
            <consortium name="The MGC Project Team"/>
        </authorList>
    </citation>
    <scope>NUCLEOTIDE SEQUENCE [LARGE SCALE MRNA] (ISOFORM 2)</scope>
    <scope>VARIANT PRO-5</scope>
    <source>
        <tissue>Brain</tissue>
    </source>
</reference>
<reference key="7">
    <citation type="journal article" date="2004" name="Biochem. J.">
        <title>Vectorial proteomics reveal targeting, phosphorylation and specific fragmentation of polymerase I and transcript release factor (PTRF) at the surface of caveolae in human adipocytes.</title>
        <authorList>
            <person name="Aboulaich N."/>
            <person name="Vainonen J.P."/>
            <person name="Stralfors P."/>
            <person name="Vener A.V."/>
        </authorList>
    </citation>
    <scope>PROTEIN SEQUENCE OF 50-78 AND 312-338</scope>
    <source>
        <tissue>Adipocyte</tissue>
    </source>
</reference>
<reference key="8">
    <citation type="submission" date="2008-12" db="UniProtKB">
        <authorList>
            <person name="Lubec G."/>
            <person name="Chen W.-Q."/>
            <person name="Sun Y."/>
        </authorList>
    </citation>
    <scope>PROTEIN SEQUENCE OF 50-78 AND 231-243</scope>
    <scope>IDENTIFICATION BY MASS SPECTROMETRY</scope>
    <source>
        <tissue>Fetal brain cortex</tissue>
    </source>
</reference>
<reference key="9">
    <citation type="journal article" date="2008" name="Proc. Natl. Acad. Sci. U.S.A.">
        <title>A quantitative atlas of mitotic phosphorylation.</title>
        <authorList>
            <person name="Dephoure N."/>
            <person name="Zhou C."/>
            <person name="Villen J."/>
            <person name="Beausoleil S.A."/>
            <person name="Bakalarski C.E."/>
            <person name="Elledge S.J."/>
            <person name="Gygi S.P."/>
        </authorList>
    </citation>
    <scope>IDENTIFICATION BY MASS SPECTROMETRY [LARGE SCALE ANALYSIS]</scope>
    <source>
        <tissue>Cervix carcinoma</tissue>
    </source>
</reference>
<reference key="10">
    <citation type="journal article" date="2009" name="Science">
        <title>Lysine acetylation targets protein complexes and co-regulates major cellular functions.</title>
        <authorList>
            <person name="Choudhary C."/>
            <person name="Kumar C."/>
            <person name="Gnad F."/>
            <person name="Nielsen M.L."/>
            <person name="Rehman M."/>
            <person name="Walther T.C."/>
            <person name="Olsen J.V."/>
            <person name="Mann M."/>
        </authorList>
    </citation>
    <scope>ACETYLATION [LARGE SCALE ANALYSIS] AT LYS-174; LYS-181; LYS-251 AND LYS-263</scope>
    <scope>IDENTIFICATION BY MASS SPECTROMETRY [LARGE SCALE ANALYSIS]</scope>
</reference>
<reference key="11">
    <citation type="journal article" date="2011" name="BMC Syst. Biol.">
        <title>Initial characterization of the human central proteome.</title>
        <authorList>
            <person name="Burkard T.R."/>
            <person name="Planyavsky M."/>
            <person name="Kaupe I."/>
            <person name="Breitwieser F.P."/>
            <person name="Buerckstuemmer T."/>
            <person name="Bennett K.L."/>
            <person name="Superti-Furga G."/>
            <person name="Colinge J."/>
        </authorList>
    </citation>
    <scope>IDENTIFICATION BY MASS SPECTROMETRY [LARGE SCALE ANALYSIS]</scope>
</reference>
<reference key="12">
    <citation type="journal article" date="2014" name="J. Proteomics">
        <title>An enzyme assisted RP-RPLC approach for in-depth analysis of human liver phosphoproteome.</title>
        <authorList>
            <person name="Bian Y."/>
            <person name="Song C."/>
            <person name="Cheng K."/>
            <person name="Dong M."/>
            <person name="Wang F."/>
            <person name="Huang J."/>
            <person name="Sun D."/>
            <person name="Wang L."/>
            <person name="Ye M."/>
            <person name="Zou H."/>
        </authorList>
    </citation>
    <scope>IDENTIFICATION BY MASS SPECTROMETRY [LARGE SCALE ANALYSIS]</scope>
    <source>
        <tissue>Liver</tissue>
    </source>
</reference>
<reference key="13">
    <citation type="journal article" date="2015" name="Proteomics">
        <title>N-terminome analysis of the human mitochondrial proteome.</title>
        <authorList>
            <person name="Vaca Jacome A.S."/>
            <person name="Rabilloud T."/>
            <person name="Schaeffer-Reiss C."/>
            <person name="Rompais M."/>
            <person name="Ayoub D."/>
            <person name="Lane L."/>
            <person name="Bairoch A."/>
            <person name="Van Dorsselaer A."/>
            <person name="Carapito C."/>
        </authorList>
    </citation>
    <scope>IDENTIFICATION BY MASS SPECTROMETRY [LARGE SCALE ANALYSIS]</scope>
</reference>
<reference key="14">
    <citation type="journal article" date="2007" name="Biochemistry">
        <title>Crystallographic and kinetic studies of human mitochondrial acetoacetyl-CoA thiolase: the importance of potassium and chloride ions for its structure and function.</title>
        <authorList>
            <person name="Haapalainen A.M."/>
            <person name="Merilaeinen G."/>
            <person name="Pirilae P.L."/>
            <person name="Kondo N."/>
            <person name="Fukao T."/>
            <person name="Wierenga R.K."/>
        </authorList>
    </citation>
    <scope>X-RAY CRYSTALLOGRAPHY (1.85 ANGSTROMS) OF 35-427 IN COMPLEX WITH COENZYME A AND POTASSIUM</scope>
    <scope>FUNCTION</scope>
    <scope>CATALYTIC ACTIVITY</scope>
    <scope>BIOPHYSICOCHEMICAL PROPERTIES</scope>
    <scope>ACTIVITY REGULATION</scope>
    <scope>SUBUNIT</scope>
    <scope>ACTIVE SITE</scope>
</reference>
<reference key="15">
    <citation type="journal article" date="1995" name="Hum. Mutat.">
        <title>Molecular basis of beta-ketothiolase deficiency: mutations and polymorphisms in the human mitochondrial acetoacetyl-coenzyme A thiolase gene.</title>
        <authorList>
            <person name="Fukao T."/>
            <person name="Yamaguchi S."/>
            <person name="Orii T."/>
            <person name="Hashimoto T."/>
        </authorList>
    </citation>
    <scope>REVIEW ON 3KTD VARIANTS</scope>
</reference>
<reference key="16">
    <citation type="journal article" date="1992" name="J. Clin. Invest.">
        <title>Identification of three mutant alleles of the gene for mitochondrial acetoacetyl-coenzyme A thiolase. A complete analysis of two generations of a family with 3-ketothiolase deficiency.</title>
        <authorList>
            <person name="Fukao T."/>
            <person name="Yamaguchi S."/>
            <person name="Orii T."/>
            <person name="Schutgens R.B.H."/>
            <person name="Osumi T."/>
            <person name="Hashimoto T."/>
        </authorList>
    </citation>
    <scope>VARIANT 3KTD ARG-183</scope>
</reference>
<reference key="17">
    <citation type="journal article" date="1991" name="Biochem. Biophys. Res. Commun.">
        <title>Evidence for a structural mutation (347Ala to Thr) in a German family with 3-ketothiolase deficiency.</title>
        <authorList>
            <person name="Fukao T."/>
            <person name="Yamaguchi S."/>
            <person name="Tomatsu S."/>
            <person name="Orii T."/>
            <person name="Frauendienst-Egger G."/>
            <person name="Schrod L."/>
            <person name="Osumi T."/>
            <person name="Hashimoto T."/>
        </authorList>
    </citation>
    <scope>VARIANT 3KTD THR-380</scope>
    <scope>CHARACTERIZATION OF VARIANT 3KTD THR-380</scope>
    <scope>FUNCTION</scope>
    <scope>CATALYTIC ACTIVITY</scope>
    <scope>PATHWAY</scope>
</reference>
<reference key="18">
    <citation type="journal article" date="1994" name="J. Clin. Invest.">
        <title>Identification of a novel exonic mutation at -13 from 5' splice site causing exon skipping in a girl with mitochondrial acetoacetyl-coenzyme A thiolase deficiency.</title>
        <authorList>
            <person name="Fukao T."/>
            <person name="Yamaguchi S."/>
            <person name="Wakazono A."/>
            <person name="Orii T."/>
            <person name="Hoganson G."/>
            <person name="Hashimoto T."/>
        </authorList>
    </citation>
    <scope>VARIANTS 3KTD ALA-152 AND VAL-379</scope>
</reference>
<reference key="19">
    <citation type="journal article" date="1995" name="Hum. Mutat.">
        <title>Molecular, biochemical, and clinical characterization of mitochondrial acetoacetyl-coenzyme A thiolase deficiency in two further patients.</title>
        <authorList>
            <person name="Wakazono A."/>
            <person name="Fukao T."/>
            <person name="Yamaguchi S."/>
            <person name="Hori T."/>
            <person name="Orii T."/>
            <person name="Lambert M."/>
            <person name="Mitchell G.A."/>
            <person name="Lee G.W."/>
            <person name="Hashimoto T."/>
        </authorList>
    </citation>
    <scope>VARIANTS 3KTD ASP-158; MET-297 AND PRO-301</scope>
    <scope>CHARACTERIZATION OF VARIANTS 3KTD ASP-158; MET-297 AND PRO-301</scope>
    <scope>FUNCTION</scope>
    <scope>CATALYTIC ACTIVITY</scope>
    <scope>PATHWAY</scope>
</reference>
<reference key="20">
    <citation type="journal article" date="1998" name="Hum. Mutat.">
        <title>Characterization of N93S, I312T, and A333P missense mutations in two Japanese families with mitochondrial acetoacetyl-CoA thiolase deficiency.</title>
        <authorList>
            <person name="Fukao T."/>
            <person name="Nakamura H."/>
            <person name="Song X.-Q."/>
            <person name="Nakamura K."/>
            <person name="Orii K.E."/>
            <person name="Kohno Y."/>
            <person name="Kano M."/>
            <person name="Yamaguchi S."/>
            <person name="Hashimoto T."/>
            <person name="Orii T."/>
            <person name="Kondo N."/>
        </authorList>
    </citation>
    <scope>VARIANTS 3KTD SER-93; THR-312 AND PRO-333</scope>
    <scope>CHARACTERIZATION OF VARIANTS 3KTD SER-93; THR-312 AND PRO-333</scope>
    <scope>FUNCTION</scope>
    <scope>CATALYTIC ACTIVITY</scope>
    <scope>PATHWAY</scope>
</reference>
<organism>
    <name type="scientific">Homo sapiens</name>
    <name type="common">Human</name>
    <dbReference type="NCBI Taxonomy" id="9606"/>
    <lineage>
        <taxon>Eukaryota</taxon>
        <taxon>Metazoa</taxon>
        <taxon>Chordata</taxon>
        <taxon>Craniata</taxon>
        <taxon>Vertebrata</taxon>
        <taxon>Euteleostomi</taxon>
        <taxon>Mammalia</taxon>
        <taxon>Eutheria</taxon>
        <taxon>Euarchontoglires</taxon>
        <taxon>Primates</taxon>
        <taxon>Haplorrhini</taxon>
        <taxon>Catarrhini</taxon>
        <taxon>Hominidae</taxon>
        <taxon>Homo</taxon>
    </lineage>
</organism>